<feature type="chain" id="PRO_0000266579" description="Large ribosomal subunit protein uL14">
    <location>
        <begin position="1"/>
        <end position="123"/>
    </location>
</feature>
<name>RL14_VIBCH</name>
<proteinExistence type="inferred from homology"/>
<organism>
    <name type="scientific">Vibrio cholerae serotype O1 (strain ATCC 39315 / El Tor Inaba N16961)</name>
    <dbReference type="NCBI Taxonomy" id="243277"/>
    <lineage>
        <taxon>Bacteria</taxon>
        <taxon>Pseudomonadati</taxon>
        <taxon>Pseudomonadota</taxon>
        <taxon>Gammaproteobacteria</taxon>
        <taxon>Vibrionales</taxon>
        <taxon>Vibrionaceae</taxon>
        <taxon>Vibrio</taxon>
    </lineage>
</organism>
<accession>Q9KNZ4</accession>
<comment type="function">
    <text evidence="1">Binds to 23S rRNA. Forms part of two intersubunit bridges in the 70S ribosome.</text>
</comment>
<comment type="subunit">
    <text evidence="1">Part of the 50S ribosomal subunit. Forms a cluster with proteins L3 and L19. In the 70S ribosome, L14 and L19 interact and together make contacts with the 16S rRNA in bridges B5 and B8.</text>
</comment>
<comment type="similarity">
    <text evidence="1">Belongs to the universal ribosomal protein uL14 family.</text>
</comment>
<reference key="1">
    <citation type="journal article" date="2000" name="Nature">
        <title>DNA sequence of both chromosomes of the cholera pathogen Vibrio cholerae.</title>
        <authorList>
            <person name="Heidelberg J.F."/>
            <person name="Eisen J.A."/>
            <person name="Nelson W.C."/>
            <person name="Clayton R.A."/>
            <person name="Gwinn M.L."/>
            <person name="Dodson R.J."/>
            <person name="Haft D.H."/>
            <person name="Hickey E.K."/>
            <person name="Peterson J.D."/>
            <person name="Umayam L.A."/>
            <person name="Gill S.R."/>
            <person name="Nelson K.E."/>
            <person name="Read T.D."/>
            <person name="Tettelin H."/>
            <person name="Richardson D.L."/>
            <person name="Ermolaeva M.D."/>
            <person name="Vamathevan J.J."/>
            <person name="Bass S."/>
            <person name="Qin H."/>
            <person name="Dragoi I."/>
            <person name="Sellers P."/>
            <person name="McDonald L.A."/>
            <person name="Utterback T.R."/>
            <person name="Fleischmann R.D."/>
            <person name="Nierman W.C."/>
            <person name="White O."/>
            <person name="Salzberg S.L."/>
            <person name="Smith H.O."/>
            <person name="Colwell R.R."/>
            <person name="Mekalanos J.J."/>
            <person name="Venter J.C."/>
            <person name="Fraser C.M."/>
        </authorList>
    </citation>
    <scope>NUCLEOTIDE SEQUENCE [LARGE SCALE GENOMIC DNA]</scope>
    <source>
        <strain>ATCC 39315 / El Tor Inaba N16961</strain>
    </source>
</reference>
<protein>
    <recommendedName>
        <fullName evidence="1">Large ribosomal subunit protein uL14</fullName>
    </recommendedName>
    <alternativeName>
        <fullName evidence="2">50S ribosomal protein L14</fullName>
    </alternativeName>
</protein>
<keyword id="KW-1185">Reference proteome</keyword>
<keyword id="KW-0687">Ribonucleoprotein</keyword>
<keyword id="KW-0689">Ribosomal protein</keyword>
<keyword id="KW-0694">RNA-binding</keyword>
<keyword id="KW-0699">rRNA-binding</keyword>
<dbReference type="EMBL" id="AE003852">
    <property type="protein sequence ID" value="AAF95727.1"/>
    <property type="molecule type" value="Genomic_DNA"/>
</dbReference>
<dbReference type="PIR" id="D82058">
    <property type="entry name" value="D82058"/>
</dbReference>
<dbReference type="RefSeq" id="NP_232214.1">
    <property type="nucleotide sequence ID" value="NC_002505.1"/>
</dbReference>
<dbReference type="RefSeq" id="WP_000615540.1">
    <property type="nucleotide sequence ID" value="NZ_LT906614.1"/>
</dbReference>
<dbReference type="SMR" id="Q9KNZ4"/>
<dbReference type="STRING" id="243277.VC_2586"/>
<dbReference type="DNASU" id="2615603"/>
<dbReference type="EnsemblBacteria" id="AAF95727">
    <property type="protein sequence ID" value="AAF95727"/>
    <property type="gene ID" value="VC_2586"/>
</dbReference>
<dbReference type="GeneID" id="94012762"/>
<dbReference type="KEGG" id="vch:VC_2586"/>
<dbReference type="PATRIC" id="fig|243277.26.peg.2465"/>
<dbReference type="eggNOG" id="COG0093">
    <property type="taxonomic scope" value="Bacteria"/>
</dbReference>
<dbReference type="HOGENOM" id="CLU_095071_2_1_6"/>
<dbReference type="Proteomes" id="UP000000584">
    <property type="component" value="Chromosome 1"/>
</dbReference>
<dbReference type="GO" id="GO:0022625">
    <property type="term" value="C:cytosolic large ribosomal subunit"/>
    <property type="evidence" value="ECO:0000318"/>
    <property type="project" value="GO_Central"/>
</dbReference>
<dbReference type="GO" id="GO:0070180">
    <property type="term" value="F:large ribosomal subunit rRNA binding"/>
    <property type="evidence" value="ECO:0000318"/>
    <property type="project" value="GO_Central"/>
</dbReference>
<dbReference type="GO" id="GO:0003735">
    <property type="term" value="F:structural constituent of ribosome"/>
    <property type="evidence" value="ECO:0000318"/>
    <property type="project" value="GO_Central"/>
</dbReference>
<dbReference type="GO" id="GO:0006412">
    <property type="term" value="P:translation"/>
    <property type="evidence" value="ECO:0007669"/>
    <property type="project" value="UniProtKB-UniRule"/>
</dbReference>
<dbReference type="CDD" id="cd00337">
    <property type="entry name" value="Ribosomal_uL14"/>
    <property type="match status" value="1"/>
</dbReference>
<dbReference type="FunFam" id="2.40.150.20:FF:000001">
    <property type="entry name" value="50S ribosomal protein L14"/>
    <property type="match status" value="1"/>
</dbReference>
<dbReference type="Gene3D" id="2.40.150.20">
    <property type="entry name" value="Ribosomal protein L14"/>
    <property type="match status" value="1"/>
</dbReference>
<dbReference type="HAMAP" id="MF_01367">
    <property type="entry name" value="Ribosomal_uL14"/>
    <property type="match status" value="1"/>
</dbReference>
<dbReference type="InterPro" id="IPR000218">
    <property type="entry name" value="Ribosomal_uL14"/>
</dbReference>
<dbReference type="InterPro" id="IPR005745">
    <property type="entry name" value="Ribosomal_uL14_bac-type"/>
</dbReference>
<dbReference type="InterPro" id="IPR019972">
    <property type="entry name" value="Ribosomal_uL14_CS"/>
</dbReference>
<dbReference type="InterPro" id="IPR036853">
    <property type="entry name" value="Ribosomal_uL14_sf"/>
</dbReference>
<dbReference type="NCBIfam" id="TIGR01067">
    <property type="entry name" value="rplN_bact"/>
    <property type="match status" value="1"/>
</dbReference>
<dbReference type="PANTHER" id="PTHR11761">
    <property type="entry name" value="50S/60S RIBOSOMAL PROTEIN L14/L23"/>
    <property type="match status" value="1"/>
</dbReference>
<dbReference type="PANTHER" id="PTHR11761:SF3">
    <property type="entry name" value="LARGE RIBOSOMAL SUBUNIT PROTEIN UL14M"/>
    <property type="match status" value="1"/>
</dbReference>
<dbReference type="Pfam" id="PF00238">
    <property type="entry name" value="Ribosomal_L14"/>
    <property type="match status" value="1"/>
</dbReference>
<dbReference type="SMART" id="SM01374">
    <property type="entry name" value="Ribosomal_L14"/>
    <property type="match status" value="1"/>
</dbReference>
<dbReference type="SUPFAM" id="SSF50193">
    <property type="entry name" value="Ribosomal protein L14"/>
    <property type="match status" value="1"/>
</dbReference>
<dbReference type="PROSITE" id="PS00049">
    <property type="entry name" value="RIBOSOMAL_L14"/>
    <property type="match status" value="1"/>
</dbReference>
<sequence length="123" mass="13581">MIQMQTMLDAADNSGARSVMCIKVLGGSHRRYAHVGDIIKVTVKEAIPRGKVKKGDVLKAVVVRTRKGVRRPDGSVIRFDRNACVLLNNNSEQPIGTRIFGPVTRELRNAKFMKIVSLAPEVL</sequence>
<gene>
    <name evidence="1" type="primary">rplN</name>
    <name type="ordered locus">VC_2586</name>
</gene>
<evidence type="ECO:0000255" key="1">
    <source>
        <dbReference type="HAMAP-Rule" id="MF_01367"/>
    </source>
</evidence>
<evidence type="ECO:0000305" key="2"/>